<comment type="function">
    <text>Protamines substitute for histones in the chromatin of sperm during the haploid phase of spermatogenesis. They compact sperm DNA into a highly condensed, stable and inactive complex.</text>
</comment>
<comment type="subcellular location">
    <subcellularLocation>
        <location>Nucleus</location>
    </subcellularLocation>
    <subcellularLocation>
        <location>Chromosome</location>
    </subcellularLocation>
</comment>
<comment type="tissue specificity">
    <text>Testis.</text>
</comment>
<comment type="similarity">
    <text evidence="2">Belongs to the protamine P1 family.</text>
</comment>
<sequence>MARYRHSRSRSRSRYRRRRRRRSRYRSRRRRYRGRRRRRSRRGRRRRGYSCRRYSRRRRRRY</sequence>
<protein>
    <recommendedName>
        <fullName>Sperm protamine P1</fullName>
    </recommendedName>
</protein>
<proteinExistence type="evidence at transcript level"/>
<evidence type="ECO:0000256" key="1">
    <source>
        <dbReference type="SAM" id="MobiDB-lite"/>
    </source>
</evidence>
<evidence type="ECO:0000305" key="2"/>
<gene>
    <name type="primary">PRM1</name>
</gene>
<organism>
    <name type="scientific">Thylogale stigmatica</name>
    <name type="common">Red-legged pademelon</name>
    <dbReference type="NCBI Taxonomy" id="9328"/>
    <lineage>
        <taxon>Eukaryota</taxon>
        <taxon>Metazoa</taxon>
        <taxon>Chordata</taxon>
        <taxon>Craniata</taxon>
        <taxon>Vertebrata</taxon>
        <taxon>Euteleostomi</taxon>
        <taxon>Mammalia</taxon>
        <taxon>Metatheria</taxon>
        <taxon>Diprotodontia</taxon>
        <taxon>Macropodidae</taxon>
        <taxon>Thylogale</taxon>
    </lineage>
</organism>
<reference key="1">
    <citation type="journal article" date="2000" name="J. Mammal. Evol.">
        <title>Intergeneric relationships among Macropodoidea (Metatheria: Diprotodontia) and the chronicle of kangaroo evolution.</title>
        <authorList>
            <person name="Burk A."/>
            <person name="Springer M.S."/>
        </authorList>
    </citation>
    <scope>NUCLEOTIDE SEQUENCE [GENOMIC DNA]</scope>
</reference>
<name>HSP1_THYST</name>
<feature type="chain" id="PRO_0000191578" description="Sperm protamine P1">
    <location>
        <begin position="1"/>
        <end position="62"/>
    </location>
</feature>
<feature type="region of interest" description="Disordered" evidence="1">
    <location>
        <begin position="1"/>
        <end position="62"/>
    </location>
</feature>
<keyword id="KW-0158">Chromosome</keyword>
<keyword id="KW-0217">Developmental protein</keyword>
<keyword id="KW-0221">Differentiation</keyword>
<keyword id="KW-0226">DNA condensation</keyword>
<keyword id="KW-0238">DNA-binding</keyword>
<keyword id="KW-0544">Nucleosome core</keyword>
<keyword id="KW-0539">Nucleus</keyword>
<keyword id="KW-0744">Spermatogenesis</keyword>
<accession>Q9GLQ8</accession>
<dbReference type="EMBL" id="AF187534">
    <property type="protein sequence ID" value="AAG27951.1"/>
    <property type="molecule type" value="Genomic_DNA"/>
</dbReference>
<dbReference type="GO" id="GO:0000786">
    <property type="term" value="C:nucleosome"/>
    <property type="evidence" value="ECO:0007669"/>
    <property type="project" value="UniProtKB-KW"/>
</dbReference>
<dbReference type="GO" id="GO:0005634">
    <property type="term" value="C:nucleus"/>
    <property type="evidence" value="ECO:0007669"/>
    <property type="project" value="UniProtKB-SubCell"/>
</dbReference>
<dbReference type="GO" id="GO:0003677">
    <property type="term" value="F:DNA binding"/>
    <property type="evidence" value="ECO:0007669"/>
    <property type="project" value="UniProtKB-KW"/>
</dbReference>
<dbReference type="GO" id="GO:0030261">
    <property type="term" value="P:chromosome condensation"/>
    <property type="evidence" value="ECO:0007669"/>
    <property type="project" value="UniProtKB-KW"/>
</dbReference>
<dbReference type="GO" id="GO:0035092">
    <property type="term" value="P:sperm DNA condensation"/>
    <property type="evidence" value="ECO:0007669"/>
    <property type="project" value="InterPro"/>
</dbReference>
<dbReference type="InterPro" id="IPR000221">
    <property type="entry name" value="Protamine_P1"/>
</dbReference>
<dbReference type="PROSITE" id="PS00048">
    <property type="entry name" value="PROTAMINE_P1"/>
    <property type="match status" value="1"/>
</dbReference>